<sequence>MELTTEAPFINNNNNNNNNNNNNNNNNNNNNNNNNNNNNNTPNNTSYSNYPQSGYVYQNYPLNNNNGGNNNNTIYYNQPQQYDPNYQTSVTSNSYPQYSYFASPNIISPIPSPCLGSTPSPIPSPTIYQYSNNSNNYCAINTPPLTSVPSPILNCNNKKRPEFNNNNNNHNHNNNNNNNNNNNNYNYNNSNNNQQQQKQQQQQQQQQQQPQQPQQQSQQQQQQQQQQQQQQQQQFKQTNINTTPKNLSPVLQSVNSSASSTPQIQSYFQQPQYQQQYQQQYQQQYQQYQQPQQLSSANTTPQTNERPNYSSIIQPNQLFSQMVPSFINGAINNNNNNNNNNNNNNNNNNNNNNNNNNNNNNNNNTTTNNNNNNNNNNNYNNITYFQPYTPFSIVDNSSMIVPDKQPQQQQPQQQPQQQQQQQQQQQQQQQQQQQQQQQQQQQQQQQQNYNDDSNKNNNNNNNNNNNNNNNNNNNNNNNNENINSSNNNNMYNICPAAAYQNIQFIKEQSNSSLSSSQPIPPFNLYNEQPQQQPQQPQPTQSQPILSSSSTSVFDINHHHHHQQQQQQQQQQQQQQQQQQQQQQQQQQQQQPQPNLSSSSYADNNNSFQSSSGNVWESQSSPIQSSVQISSPPQSNQSSIAPAPAVNLSASASSVATTTKQSNVKKQKQQQQQQQQQQQTKRQELSDSEDDTDNGDDIDEDDEDDDEDEDDMEDEDTSSSSSSSSSSSSLSKKSPAVKKSGLKKSGRSKSSSNESKAKGHWTKEEDEKLRSLVDLHGTKRWKYIASLLCLRNGRQCRERWSNQLDPSIKRDAWTLEEDRIILDAHSKYGNKWAEISKLLPGRTNCAIKNHWNSTMKRKLSKKQYDFSSLPPISSSIVSDNSSSLSTPTDSISSSPSTSPITLSSNVVVNDFDSQQQQQQQQTYQQPPPQSQDSGNNQFNFNNNNNNNNNNNNNNNNSVESIKLYTNVNISYI</sequence>
<proteinExistence type="inferred from homology"/>
<keyword id="KW-0238">DNA-binding</keyword>
<keyword id="KW-0539">Nucleus</keyword>
<keyword id="KW-1185">Reference proteome</keyword>
<keyword id="KW-0677">Repeat</keyword>
<keyword id="KW-0804">Transcription</keyword>
<keyword id="KW-0805">Transcription regulation</keyword>
<dbReference type="EMBL" id="AAFI02000003">
    <property type="protein sequence ID" value="EDR41123.1"/>
    <property type="molecule type" value="Genomic_DNA"/>
</dbReference>
<dbReference type="RefSeq" id="XP_001732948.1">
    <property type="nucleotide sequence ID" value="XM_001732896.1"/>
</dbReference>
<dbReference type="SMR" id="B0G0Y5"/>
<dbReference type="FunCoup" id="B0G0Y5">
    <property type="interactions" value="376"/>
</dbReference>
<dbReference type="STRING" id="44689.B0G0Y5"/>
<dbReference type="GlyGen" id="B0G0Y5">
    <property type="glycosylation" value="1 site"/>
</dbReference>
<dbReference type="PaxDb" id="44689-DDB0238728"/>
<dbReference type="EnsemblProtists" id="EDR41123">
    <property type="protein sequence ID" value="EDR41123"/>
    <property type="gene ID" value="DDB_G0268368"/>
</dbReference>
<dbReference type="GeneID" id="8616180"/>
<dbReference type="KEGG" id="ddi:DDB_G0268368"/>
<dbReference type="dictyBase" id="DDB_G0268368">
    <property type="gene designation" value="mybAA"/>
</dbReference>
<dbReference type="VEuPathDB" id="AmoebaDB:DDB_G0268368"/>
<dbReference type="eggNOG" id="KOG0048">
    <property type="taxonomic scope" value="Eukaryota"/>
</dbReference>
<dbReference type="HOGENOM" id="CLU_305541_0_0_1"/>
<dbReference type="InParanoid" id="B0G0Y5"/>
<dbReference type="OMA" id="NYCAINT"/>
<dbReference type="PRO" id="PR:B0G0Y5"/>
<dbReference type="Proteomes" id="UP000002195">
    <property type="component" value="Chromosome 1"/>
</dbReference>
<dbReference type="GO" id="GO:0005634">
    <property type="term" value="C:nucleus"/>
    <property type="evidence" value="ECO:0000318"/>
    <property type="project" value="GO_Central"/>
</dbReference>
<dbReference type="GO" id="GO:0000981">
    <property type="term" value="F:DNA-binding transcription factor activity, RNA polymerase II-specific"/>
    <property type="evidence" value="ECO:0000318"/>
    <property type="project" value="GO_Central"/>
</dbReference>
<dbReference type="GO" id="GO:0000978">
    <property type="term" value="F:RNA polymerase II cis-regulatory region sequence-specific DNA binding"/>
    <property type="evidence" value="ECO:0000318"/>
    <property type="project" value="GO_Central"/>
</dbReference>
<dbReference type="GO" id="GO:0000278">
    <property type="term" value="P:mitotic cell cycle"/>
    <property type="evidence" value="ECO:0000318"/>
    <property type="project" value="GO_Central"/>
</dbReference>
<dbReference type="GO" id="GO:0045944">
    <property type="term" value="P:positive regulation of transcription by RNA polymerase II"/>
    <property type="evidence" value="ECO:0000318"/>
    <property type="project" value="GO_Central"/>
</dbReference>
<dbReference type="CDD" id="cd00167">
    <property type="entry name" value="SANT"/>
    <property type="match status" value="2"/>
</dbReference>
<dbReference type="FunFam" id="1.10.10.60:FF:000314">
    <property type="entry name" value="Small nuclear RNA-activating complex, polypeptide 4"/>
    <property type="match status" value="1"/>
</dbReference>
<dbReference type="Gene3D" id="1.10.10.60">
    <property type="entry name" value="Homeodomain-like"/>
    <property type="match status" value="2"/>
</dbReference>
<dbReference type="InterPro" id="IPR009057">
    <property type="entry name" value="Homeodomain-like_sf"/>
</dbReference>
<dbReference type="InterPro" id="IPR052145">
    <property type="entry name" value="Mediator/Homeobox_domain"/>
</dbReference>
<dbReference type="InterPro" id="IPR017930">
    <property type="entry name" value="Myb_dom"/>
</dbReference>
<dbReference type="InterPro" id="IPR001005">
    <property type="entry name" value="SANT/Myb"/>
</dbReference>
<dbReference type="PANTHER" id="PTHR24330">
    <property type="entry name" value="HOMEOBOX PROTEIN BARH-LIKE"/>
    <property type="match status" value="1"/>
</dbReference>
<dbReference type="PANTHER" id="PTHR24330:SF19">
    <property type="entry name" value="MEDIATOR OF RNA POLYMERASE II TRANSCRIPTION SUBUNIT 29"/>
    <property type="match status" value="1"/>
</dbReference>
<dbReference type="Pfam" id="PF13921">
    <property type="entry name" value="Myb_DNA-bind_6"/>
    <property type="match status" value="1"/>
</dbReference>
<dbReference type="SMART" id="SM00717">
    <property type="entry name" value="SANT"/>
    <property type="match status" value="2"/>
</dbReference>
<dbReference type="SUPFAM" id="SSF46689">
    <property type="entry name" value="Homeodomain-like"/>
    <property type="match status" value="1"/>
</dbReference>
<dbReference type="PROSITE" id="PS51294">
    <property type="entry name" value="HTH_MYB"/>
    <property type="match status" value="2"/>
</dbReference>
<accession>B0G0Y5</accession>
<evidence type="ECO:0000255" key="1">
    <source>
        <dbReference type="PROSITE-ProRule" id="PRU00625"/>
    </source>
</evidence>
<evidence type="ECO:0000256" key="2">
    <source>
        <dbReference type="SAM" id="MobiDB-lite"/>
    </source>
</evidence>
<name>MYBAA_DICDI</name>
<organism>
    <name type="scientific">Dictyostelium discoideum</name>
    <name type="common">Social amoeba</name>
    <dbReference type="NCBI Taxonomy" id="44689"/>
    <lineage>
        <taxon>Eukaryota</taxon>
        <taxon>Amoebozoa</taxon>
        <taxon>Evosea</taxon>
        <taxon>Eumycetozoa</taxon>
        <taxon>Dictyostelia</taxon>
        <taxon>Dictyosteliales</taxon>
        <taxon>Dictyosteliaceae</taxon>
        <taxon>Dictyostelium</taxon>
    </lineage>
</organism>
<reference key="1">
    <citation type="journal article" date="2005" name="Nature">
        <title>The genome of the social amoeba Dictyostelium discoideum.</title>
        <authorList>
            <person name="Eichinger L."/>
            <person name="Pachebat J.A."/>
            <person name="Gloeckner G."/>
            <person name="Rajandream M.A."/>
            <person name="Sucgang R."/>
            <person name="Berriman M."/>
            <person name="Song J."/>
            <person name="Olsen R."/>
            <person name="Szafranski K."/>
            <person name="Xu Q."/>
            <person name="Tunggal B."/>
            <person name="Kummerfeld S."/>
            <person name="Madera M."/>
            <person name="Konfortov B.A."/>
            <person name="Rivero F."/>
            <person name="Bankier A.T."/>
            <person name="Lehmann R."/>
            <person name="Hamlin N."/>
            <person name="Davies R."/>
            <person name="Gaudet P."/>
            <person name="Fey P."/>
            <person name="Pilcher K."/>
            <person name="Chen G."/>
            <person name="Saunders D."/>
            <person name="Sodergren E.J."/>
            <person name="Davis P."/>
            <person name="Kerhornou A."/>
            <person name="Nie X."/>
            <person name="Hall N."/>
            <person name="Anjard C."/>
            <person name="Hemphill L."/>
            <person name="Bason N."/>
            <person name="Farbrother P."/>
            <person name="Desany B."/>
            <person name="Just E."/>
            <person name="Morio T."/>
            <person name="Rost R."/>
            <person name="Churcher C.M."/>
            <person name="Cooper J."/>
            <person name="Haydock S."/>
            <person name="van Driessche N."/>
            <person name="Cronin A."/>
            <person name="Goodhead I."/>
            <person name="Muzny D.M."/>
            <person name="Mourier T."/>
            <person name="Pain A."/>
            <person name="Lu M."/>
            <person name="Harper D."/>
            <person name="Lindsay R."/>
            <person name="Hauser H."/>
            <person name="James K.D."/>
            <person name="Quiles M."/>
            <person name="Madan Babu M."/>
            <person name="Saito T."/>
            <person name="Buchrieser C."/>
            <person name="Wardroper A."/>
            <person name="Felder M."/>
            <person name="Thangavelu M."/>
            <person name="Johnson D."/>
            <person name="Knights A."/>
            <person name="Loulseged H."/>
            <person name="Mungall K.L."/>
            <person name="Oliver K."/>
            <person name="Price C."/>
            <person name="Quail M.A."/>
            <person name="Urushihara H."/>
            <person name="Hernandez J."/>
            <person name="Rabbinowitsch E."/>
            <person name="Steffen D."/>
            <person name="Sanders M."/>
            <person name="Ma J."/>
            <person name="Kohara Y."/>
            <person name="Sharp S."/>
            <person name="Simmonds M.N."/>
            <person name="Spiegler S."/>
            <person name="Tivey A."/>
            <person name="Sugano S."/>
            <person name="White B."/>
            <person name="Walker D."/>
            <person name="Woodward J.R."/>
            <person name="Winckler T."/>
            <person name="Tanaka Y."/>
            <person name="Shaulsky G."/>
            <person name="Schleicher M."/>
            <person name="Weinstock G.M."/>
            <person name="Rosenthal A."/>
            <person name="Cox E.C."/>
            <person name="Chisholm R.L."/>
            <person name="Gibbs R.A."/>
            <person name="Loomis W.F."/>
            <person name="Platzer M."/>
            <person name="Kay R.R."/>
            <person name="Williams J.G."/>
            <person name="Dear P.H."/>
            <person name="Noegel A.A."/>
            <person name="Barrell B.G."/>
            <person name="Kuspa A."/>
        </authorList>
    </citation>
    <scope>NUCLEOTIDE SEQUENCE [LARGE SCALE GENOMIC DNA]</scope>
    <source>
        <strain>AX4</strain>
    </source>
</reference>
<feature type="chain" id="PRO_0000329399" description="Myb-like protein AA">
    <location>
        <begin position="1"/>
        <end position="971"/>
    </location>
</feature>
<feature type="domain" description="HTH myb-type 1" evidence="1">
    <location>
        <begin position="752"/>
        <end position="803"/>
    </location>
</feature>
<feature type="domain" description="HTH myb-type 2" evidence="1">
    <location>
        <begin position="804"/>
        <end position="858"/>
    </location>
</feature>
<feature type="DNA-binding region" description="H-T-H motif" evidence="1">
    <location>
        <begin position="780"/>
        <end position="802"/>
    </location>
</feature>
<feature type="DNA-binding region" description="H-T-H motif" evidence="1">
    <location>
        <begin position="831"/>
        <end position="854"/>
    </location>
</feature>
<feature type="region of interest" description="Disordered" evidence="2">
    <location>
        <begin position="1"/>
        <end position="54"/>
    </location>
</feature>
<feature type="region of interest" description="Disordered" evidence="2">
    <location>
        <begin position="151"/>
        <end position="220"/>
    </location>
</feature>
<feature type="region of interest" description="Disordered" evidence="2">
    <location>
        <begin position="288"/>
        <end position="309"/>
    </location>
</feature>
<feature type="region of interest" description="Disordered" evidence="2">
    <location>
        <begin position="329"/>
        <end position="383"/>
    </location>
</feature>
<feature type="region of interest" description="Disordered" evidence="2">
    <location>
        <begin position="440"/>
        <end position="487"/>
    </location>
</feature>
<feature type="region of interest" description="Disordered" evidence="2">
    <location>
        <begin position="509"/>
        <end position="764"/>
    </location>
</feature>
<feature type="region of interest" description="Disordered" evidence="2">
    <location>
        <begin position="874"/>
        <end position="898"/>
    </location>
</feature>
<feature type="region of interest" description="Disordered" evidence="2">
    <location>
        <begin position="911"/>
        <end position="958"/>
    </location>
</feature>
<feature type="compositionally biased region" description="Low complexity" evidence="2">
    <location>
        <begin position="11"/>
        <end position="40"/>
    </location>
</feature>
<feature type="compositionally biased region" description="Polar residues" evidence="2">
    <location>
        <begin position="41"/>
        <end position="52"/>
    </location>
</feature>
<feature type="compositionally biased region" description="Low complexity" evidence="2">
    <location>
        <begin position="163"/>
        <end position="220"/>
    </location>
</feature>
<feature type="compositionally biased region" description="Polar residues" evidence="2">
    <location>
        <begin position="294"/>
        <end position="309"/>
    </location>
</feature>
<feature type="compositionally biased region" description="Low complexity" evidence="2">
    <location>
        <begin position="332"/>
        <end position="381"/>
    </location>
</feature>
<feature type="compositionally biased region" description="Low complexity" evidence="2">
    <location>
        <begin position="528"/>
        <end position="551"/>
    </location>
</feature>
<feature type="compositionally biased region" description="Low complexity" evidence="2">
    <location>
        <begin position="563"/>
        <end position="590"/>
    </location>
</feature>
<feature type="compositionally biased region" description="Polar residues" evidence="2">
    <location>
        <begin position="591"/>
        <end position="616"/>
    </location>
</feature>
<feature type="compositionally biased region" description="Low complexity" evidence="2">
    <location>
        <begin position="617"/>
        <end position="661"/>
    </location>
</feature>
<feature type="compositionally biased region" description="Low complexity" evidence="2">
    <location>
        <begin position="668"/>
        <end position="679"/>
    </location>
</feature>
<feature type="compositionally biased region" description="Acidic residues" evidence="2">
    <location>
        <begin position="685"/>
        <end position="716"/>
    </location>
</feature>
<feature type="compositionally biased region" description="Low complexity" evidence="2">
    <location>
        <begin position="717"/>
        <end position="730"/>
    </location>
</feature>
<feature type="compositionally biased region" description="Basic and acidic residues" evidence="2">
    <location>
        <begin position="754"/>
        <end position="764"/>
    </location>
</feature>
<feature type="compositionally biased region" description="Low complexity" evidence="2">
    <location>
        <begin position="911"/>
        <end position="955"/>
    </location>
</feature>
<protein>
    <recommendedName>
        <fullName>Myb-like protein AA</fullName>
    </recommendedName>
</protein>
<comment type="subcellular location">
    <subcellularLocation>
        <location evidence="1">Nucleus</location>
    </subcellularLocation>
</comment>
<gene>
    <name type="primary">mybAA</name>
    <name type="ORF">DDB_G0268368</name>
</gene>